<proteinExistence type="inferred from homology"/>
<sequence>MKKIRVFVSGAGGKMGREVVRTILDQEDMQLVGASDARQQGRDIGELLAMAPLGIEITGPLEVAHLKETRADIMVDFTNPQSVLKNAKCALAAGVVPVLGTTGLDEADISEIRDLVDQTKVGAFIAPNFAIGAILMMRFAQEAAKYFPHVEIIELHHDQKLDAPSGTALKTVEWISEVRKPLVQGHPNEYEKIKGSRGGDVDGIHIHSVRLPGFIAHQEVIFGGLGQALTIRHDALSRETYMPGIMLAVRKASQLSNLVIGLENFLE</sequence>
<accession>B8FQZ3</accession>
<keyword id="KW-0028">Amino-acid biosynthesis</keyword>
<keyword id="KW-0963">Cytoplasm</keyword>
<keyword id="KW-0220">Diaminopimelate biosynthesis</keyword>
<keyword id="KW-0457">Lysine biosynthesis</keyword>
<keyword id="KW-0520">NAD</keyword>
<keyword id="KW-0521">NADP</keyword>
<keyword id="KW-0560">Oxidoreductase</keyword>
<protein>
    <recommendedName>
        <fullName evidence="1">4-hydroxy-tetrahydrodipicolinate reductase</fullName>
        <shortName evidence="1">HTPA reductase</shortName>
        <ecNumber evidence="1">1.17.1.8</ecNumber>
    </recommendedName>
</protein>
<comment type="function">
    <text evidence="1">Catalyzes the conversion of 4-hydroxy-tetrahydrodipicolinate (HTPA) to tetrahydrodipicolinate.</text>
</comment>
<comment type="catalytic activity">
    <reaction evidence="1">
        <text>(S)-2,3,4,5-tetrahydrodipicolinate + NAD(+) + H2O = (2S,4S)-4-hydroxy-2,3,4,5-tetrahydrodipicolinate + NADH + H(+)</text>
        <dbReference type="Rhea" id="RHEA:35323"/>
        <dbReference type="ChEBI" id="CHEBI:15377"/>
        <dbReference type="ChEBI" id="CHEBI:15378"/>
        <dbReference type="ChEBI" id="CHEBI:16845"/>
        <dbReference type="ChEBI" id="CHEBI:57540"/>
        <dbReference type="ChEBI" id="CHEBI:57945"/>
        <dbReference type="ChEBI" id="CHEBI:67139"/>
        <dbReference type="EC" id="1.17.1.8"/>
    </reaction>
</comment>
<comment type="catalytic activity">
    <reaction evidence="1">
        <text>(S)-2,3,4,5-tetrahydrodipicolinate + NADP(+) + H2O = (2S,4S)-4-hydroxy-2,3,4,5-tetrahydrodipicolinate + NADPH + H(+)</text>
        <dbReference type="Rhea" id="RHEA:35331"/>
        <dbReference type="ChEBI" id="CHEBI:15377"/>
        <dbReference type="ChEBI" id="CHEBI:15378"/>
        <dbReference type="ChEBI" id="CHEBI:16845"/>
        <dbReference type="ChEBI" id="CHEBI:57783"/>
        <dbReference type="ChEBI" id="CHEBI:58349"/>
        <dbReference type="ChEBI" id="CHEBI:67139"/>
        <dbReference type="EC" id="1.17.1.8"/>
    </reaction>
</comment>
<comment type="pathway">
    <text evidence="1">Amino-acid biosynthesis; L-lysine biosynthesis via DAP pathway; (S)-tetrahydrodipicolinate from L-aspartate: step 4/4.</text>
</comment>
<comment type="subcellular location">
    <subcellularLocation>
        <location evidence="1">Cytoplasm</location>
    </subcellularLocation>
</comment>
<comment type="similarity">
    <text evidence="1">Belongs to the DapB family.</text>
</comment>
<comment type="caution">
    <text evidence="2">Was originally thought to be a dihydrodipicolinate reductase (DHDPR), catalyzing the conversion of dihydrodipicolinate to tetrahydrodipicolinate. However, it was shown in E.coli that the substrate of the enzymatic reaction is not dihydrodipicolinate (DHDP) but in fact (2S,4S)-4-hydroxy-2,3,4,5-tetrahydrodipicolinic acid (HTPA), the product released by the DapA-catalyzed reaction.</text>
</comment>
<evidence type="ECO:0000255" key="1">
    <source>
        <dbReference type="HAMAP-Rule" id="MF_00102"/>
    </source>
</evidence>
<evidence type="ECO:0000305" key="2"/>
<organism>
    <name type="scientific">Desulfitobacterium hafniense (strain DSM 10664 / DCB-2)</name>
    <dbReference type="NCBI Taxonomy" id="272564"/>
    <lineage>
        <taxon>Bacteria</taxon>
        <taxon>Bacillati</taxon>
        <taxon>Bacillota</taxon>
        <taxon>Clostridia</taxon>
        <taxon>Eubacteriales</taxon>
        <taxon>Desulfitobacteriaceae</taxon>
        <taxon>Desulfitobacterium</taxon>
    </lineage>
</organism>
<feature type="chain" id="PRO_1000118852" description="4-hydroxy-tetrahydrodipicolinate reductase">
    <location>
        <begin position="1"/>
        <end position="267"/>
    </location>
</feature>
<feature type="active site" description="Proton donor/acceptor" evidence="1">
    <location>
        <position position="156"/>
    </location>
</feature>
<feature type="active site" description="Proton donor" evidence="1">
    <location>
        <position position="160"/>
    </location>
</feature>
<feature type="binding site" evidence="1">
    <location>
        <begin position="10"/>
        <end position="15"/>
    </location>
    <ligand>
        <name>NAD(+)</name>
        <dbReference type="ChEBI" id="CHEBI:57540"/>
    </ligand>
</feature>
<feature type="binding site" evidence="1">
    <location>
        <position position="38"/>
    </location>
    <ligand>
        <name>NADP(+)</name>
        <dbReference type="ChEBI" id="CHEBI:58349"/>
    </ligand>
</feature>
<feature type="binding site" evidence="1">
    <location>
        <begin position="100"/>
        <end position="102"/>
    </location>
    <ligand>
        <name>NAD(+)</name>
        <dbReference type="ChEBI" id="CHEBI:57540"/>
    </ligand>
</feature>
<feature type="binding site" evidence="1">
    <location>
        <begin position="126"/>
        <end position="129"/>
    </location>
    <ligand>
        <name>NAD(+)</name>
        <dbReference type="ChEBI" id="CHEBI:57540"/>
    </ligand>
</feature>
<feature type="binding site" evidence="1">
    <location>
        <position position="157"/>
    </location>
    <ligand>
        <name>(S)-2,3,4,5-tetrahydrodipicolinate</name>
        <dbReference type="ChEBI" id="CHEBI:16845"/>
    </ligand>
</feature>
<feature type="binding site" evidence="1">
    <location>
        <begin position="166"/>
        <end position="167"/>
    </location>
    <ligand>
        <name>(S)-2,3,4,5-tetrahydrodipicolinate</name>
        <dbReference type="ChEBI" id="CHEBI:16845"/>
    </ligand>
</feature>
<reference key="1">
    <citation type="journal article" date="2012" name="BMC Microbiol.">
        <title>Genome sequence of Desulfitobacterium hafniense DCB-2, a Gram-positive anaerobe capable of dehalogenation and metal reduction.</title>
        <authorList>
            <person name="Kim S.H."/>
            <person name="Harzman C."/>
            <person name="Davis J.K."/>
            <person name="Hutcheson R."/>
            <person name="Broderick J.B."/>
            <person name="Marsh T.L."/>
            <person name="Tiedje J.M."/>
        </authorList>
    </citation>
    <scope>NUCLEOTIDE SEQUENCE [LARGE SCALE GENOMIC DNA]</scope>
    <source>
        <strain>DSM 10664 / DCB-2</strain>
    </source>
</reference>
<dbReference type="EC" id="1.17.1.8" evidence="1"/>
<dbReference type="EMBL" id="CP001336">
    <property type="protein sequence ID" value="ACL21680.1"/>
    <property type="molecule type" value="Genomic_DNA"/>
</dbReference>
<dbReference type="RefSeq" id="WP_005808837.1">
    <property type="nucleotide sequence ID" value="NC_011830.1"/>
</dbReference>
<dbReference type="SMR" id="B8FQZ3"/>
<dbReference type="KEGG" id="dhd:Dhaf_3663"/>
<dbReference type="HOGENOM" id="CLU_047479_0_1_9"/>
<dbReference type="UniPathway" id="UPA00034">
    <property type="reaction ID" value="UER00018"/>
</dbReference>
<dbReference type="Proteomes" id="UP000007726">
    <property type="component" value="Chromosome"/>
</dbReference>
<dbReference type="GO" id="GO:0005829">
    <property type="term" value="C:cytosol"/>
    <property type="evidence" value="ECO:0007669"/>
    <property type="project" value="TreeGrafter"/>
</dbReference>
<dbReference type="GO" id="GO:0008839">
    <property type="term" value="F:4-hydroxy-tetrahydrodipicolinate reductase"/>
    <property type="evidence" value="ECO:0007669"/>
    <property type="project" value="UniProtKB-EC"/>
</dbReference>
<dbReference type="GO" id="GO:0051287">
    <property type="term" value="F:NAD binding"/>
    <property type="evidence" value="ECO:0007669"/>
    <property type="project" value="UniProtKB-UniRule"/>
</dbReference>
<dbReference type="GO" id="GO:0050661">
    <property type="term" value="F:NADP binding"/>
    <property type="evidence" value="ECO:0007669"/>
    <property type="project" value="UniProtKB-UniRule"/>
</dbReference>
<dbReference type="GO" id="GO:0016726">
    <property type="term" value="F:oxidoreductase activity, acting on CH or CH2 groups, NAD or NADP as acceptor"/>
    <property type="evidence" value="ECO:0007669"/>
    <property type="project" value="UniProtKB-UniRule"/>
</dbReference>
<dbReference type="GO" id="GO:0019877">
    <property type="term" value="P:diaminopimelate biosynthetic process"/>
    <property type="evidence" value="ECO:0007669"/>
    <property type="project" value="UniProtKB-UniRule"/>
</dbReference>
<dbReference type="GO" id="GO:0009089">
    <property type="term" value="P:lysine biosynthetic process via diaminopimelate"/>
    <property type="evidence" value="ECO:0007669"/>
    <property type="project" value="UniProtKB-UniRule"/>
</dbReference>
<dbReference type="CDD" id="cd02274">
    <property type="entry name" value="DHDPR_N"/>
    <property type="match status" value="1"/>
</dbReference>
<dbReference type="FunFam" id="3.30.360.10:FF:000009">
    <property type="entry name" value="4-hydroxy-tetrahydrodipicolinate reductase"/>
    <property type="match status" value="1"/>
</dbReference>
<dbReference type="Gene3D" id="3.30.360.10">
    <property type="entry name" value="Dihydrodipicolinate Reductase, domain 2"/>
    <property type="match status" value="1"/>
</dbReference>
<dbReference type="Gene3D" id="3.40.50.720">
    <property type="entry name" value="NAD(P)-binding Rossmann-like Domain"/>
    <property type="match status" value="1"/>
</dbReference>
<dbReference type="HAMAP" id="MF_00102">
    <property type="entry name" value="DapB"/>
    <property type="match status" value="1"/>
</dbReference>
<dbReference type="InterPro" id="IPR022663">
    <property type="entry name" value="DapB_C"/>
</dbReference>
<dbReference type="InterPro" id="IPR000846">
    <property type="entry name" value="DapB_N"/>
</dbReference>
<dbReference type="InterPro" id="IPR022664">
    <property type="entry name" value="DapB_N_CS"/>
</dbReference>
<dbReference type="InterPro" id="IPR023940">
    <property type="entry name" value="DHDPR_bac"/>
</dbReference>
<dbReference type="InterPro" id="IPR036291">
    <property type="entry name" value="NAD(P)-bd_dom_sf"/>
</dbReference>
<dbReference type="NCBIfam" id="TIGR00036">
    <property type="entry name" value="dapB"/>
    <property type="match status" value="1"/>
</dbReference>
<dbReference type="PANTHER" id="PTHR20836:SF0">
    <property type="entry name" value="4-HYDROXY-TETRAHYDRODIPICOLINATE REDUCTASE 1, CHLOROPLASTIC-RELATED"/>
    <property type="match status" value="1"/>
</dbReference>
<dbReference type="PANTHER" id="PTHR20836">
    <property type="entry name" value="DIHYDRODIPICOLINATE REDUCTASE"/>
    <property type="match status" value="1"/>
</dbReference>
<dbReference type="Pfam" id="PF05173">
    <property type="entry name" value="DapB_C"/>
    <property type="match status" value="1"/>
</dbReference>
<dbReference type="Pfam" id="PF01113">
    <property type="entry name" value="DapB_N"/>
    <property type="match status" value="1"/>
</dbReference>
<dbReference type="PIRSF" id="PIRSF000161">
    <property type="entry name" value="DHPR"/>
    <property type="match status" value="1"/>
</dbReference>
<dbReference type="SUPFAM" id="SSF55347">
    <property type="entry name" value="Glyceraldehyde-3-phosphate dehydrogenase-like, C-terminal domain"/>
    <property type="match status" value="1"/>
</dbReference>
<dbReference type="SUPFAM" id="SSF51735">
    <property type="entry name" value="NAD(P)-binding Rossmann-fold domains"/>
    <property type="match status" value="1"/>
</dbReference>
<dbReference type="PROSITE" id="PS01298">
    <property type="entry name" value="DAPB"/>
    <property type="match status" value="1"/>
</dbReference>
<name>DAPB_DESHD</name>
<gene>
    <name evidence="1" type="primary">dapB</name>
    <name type="ordered locus">Dhaf_3663</name>
</gene>